<reference key="1">
    <citation type="journal article" date="1990" name="Virology">
        <title>The complete DNA sequence of vaccinia virus.</title>
        <authorList>
            <person name="Goebel S.J."/>
            <person name="Johnson G.P."/>
            <person name="Perkus M.E."/>
            <person name="Davis S.W."/>
            <person name="Winslow J.P."/>
            <person name="Paoletti E."/>
        </authorList>
    </citation>
    <scope>NUCLEOTIDE SEQUENCE [LARGE SCALE GENOMIC DNA]</scope>
</reference>
<reference key="2">
    <citation type="journal article" date="1990" name="Virology">
        <title>Appendix to 'The complete DNA sequence of vaccinia virus'.</title>
        <authorList>
            <person name="Goebel S.J."/>
            <person name="Johnson G.P."/>
            <person name="Perkus M.E."/>
            <person name="Davis S.W."/>
            <person name="Winslow J.P."/>
            <person name="Paoletti E."/>
        </authorList>
    </citation>
    <scope>NUCLEOTIDE SEQUENCE [LARGE SCALE GENOMIC DNA]</scope>
</reference>
<name>PG200_VACCC</name>
<keyword id="KW-0244">Early protein</keyword>
<keyword id="KW-0945">Host-virus interaction</keyword>
<keyword id="KW-1100">Inhibition of host NF-kappa-B by virus</keyword>
<keyword id="KW-1185">Reference proteome</keyword>
<comment type="function">
    <text evidence="1">Contributes to virulence by binding to the host IKBKB subunit of the IKK complex and preventing host NF-kappa-B activation in response to pro-inflammatory stimuli such as TNF-alpha or IL1B. Mechanistically, sterically hinders the direct contact between the kinase domains of IKBKB in the IKK complex containing IKBKB, CHUK/IKKA and NEMO.</text>
</comment>
<comment type="subunit">
    <text evidence="1">Homodimers. Interacts with host IKBKB; this interaction inhibits host NF-kappa-B activation.</text>
</comment>
<comment type="similarity">
    <text evidence="2">Belongs to the orthopoxvirus OPG200 family.</text>
</comment>
<evidence type="ECO:0000250" key="1">
    <source>
        <dbReference type="UniProtKB" id="P24772"/>
    </source>
</evidence>
<evidence type="ECO:0000305" key="2"/>
<organism>
    <name type="scientific">Vaccinia virus (strain Copenhagen)</name>
    <name type="common">VACV</name>
    <dbReference type="NCBI Taxonomy" id="10249"/>
    <lineage>
        <taxon>Viruses</taxon>
        <taxon>Varidnaviria</taxon>
        <taxon>Bamfordvirae</taxon>
        <taxon>Nucleocytoviricota</taxon>
        <taxon>Pokkesviricetes</taxon>
        <taxon>Chitovirales</taxon>
        <taxon>Poxviridae</taxon>
        <taxon>Chordopoxvirinae</taxon>
        <taxon>Orthopoxvirus</taxon>
        <taxon>Vaccinia virus</taxon>
    </lineage>
</organism>
<protein>
    <recommendedName>
        <fullName>Protein OPG200</fullName>
    </recommendedName>
    <alternativeName>
        <fullName>Protein B15</fullName>
    </alternativeName>
</protein>
<accession>P21089</accession>
<proteinExistence type="inferred from homology"/>
<feature type="chain" id="PRO_0000099364" description="Protein OPG200">
    <location>
        <begin position="1"/>
        <end position="149"/>
    </location>
</feature>
<gene>
    <name type="primary">OPG200</name>
    <name type="ORF">B15R</name>
</gene>
<sequence>MTANFSTHVFSPQHCGCDRLTSIDDVKQCLTEYIYWSSYAYRNRQCAGQLYSTLLSFRDDAELVFIDIRELVKNMPWDDVKDCTEIIRCYIPDEQKTIREISAIIGLCAYAATYWGGEDHPTSNSLNALFVMLEMLNYVDYNIIFRRMN</sequence>
<organismHost>
    <name type="scientific">Homo sapiens</name>
    <name type="common">Human</name>
    <dbReference type="NCBI Taxonomy" id="9606"/>
</organismHost>
<dbReference type="EMBL" id="M35027">
    <property type="protein sequence ID" value="AAA48212.1"/>
    <property type="molecule type" value="Genomic_DNA"/>
</dbReference>
<dbReference type="PIR" id="E42527">
    <property type="entry name" value="E42527"/>
</dbReference>
<dbReference type="SMR" id="P21089"/>
<dbReference type="Proteomes" id="UP000008269">
    <property type="component" value="Segment"/>
</dbReference>
<dbReference type="GO" id="GO:0085034">
    <property type="term" value="P:symbiont-mediated suppression of host NF-kappaB cascade"/>
    <property type="evidence" value="ECO:0007669"/>
    <property type="project" value="UniProtKB-KW"/>
</dbReference>
<dbReference type="Gene3D" id="1.10.437.20">
    <property type="entry name" value="dsDNA poxvirus"/>
    <property type="match status" value="1"/>
</dbReference>
<dbReference type="InterPro" id="IPR011212">
    <property type="entry name" value="Poxvirus_B14/B22/C16"/>
</dbReference>
<dbReference type="InterPro" id="IPR022819">
    <property type="entry name" value="Poxvirus_Bcl-2-like"/>
</dbReference>
<dbReference type="InterPro" id="IPR043018">
    <property type="entry name" value="Poxvirus_sf"/>
</dbReference>
<dbReference type="Pfam" id="PF06227">
    <property type="entry name" value="Poxv_Bcl-2-like"/>
    <property type="match status" value="1"/>
</dbReference>
<dbReference type="PIRSF" id="PIRSF017324">
    <property type="entry name" value="UCP017324"/>
    <property type="match status" value="1"/>
</dbReference>